<name>CIPKL_ORYSJ</name>
<gene>
    <name type="primary">CIPK21</name>
    <name type="ordered locus">Os07g0637000</name>
    <name type="ordered locus">LOC_Os07g44290</name>
    <name type="ORF">OJ1136_D11.123</name>
</gene>
<proteinExistence type="evidence at transcript level"/>
<protein>
    <recommendedName>
        <fullName>CBL-interacting protein kinase 21</fullName>
        <ecNumber>2.7.11.1</ecNumber>
    </recommendedName>
    <alternativeName>
        <fullName>OsCIPK21</fullName>
    </alternativeName>
</protein>
<accession>Q0D4B2</accession>
<accession>Q69WP7</accession>
<sequence>MQKTSMNPVTDPVAAATGRVAIRQLPIKTQPNSQSLTPFLQLPPKPPPNLLFSSPLASVELRHRARARRRRRPSHPRRAPAMRMGKYEMGRALGEGHFGKVKLARHADTGAAFAIKILDRQRILAMKIDEQIKREIATLKLLKHPNVVRLHEVSASKTKIYMVLEYVNGGELFDKIALKGKLSEKEGRKLFQQLMDAVSYCHEKGVYHRDLKPENVLVDAKGNIKVSDFGLSALPQNQRKDGLLHTTCGSPNYIAPEVLLNRGYDGSLSDIWSCGVILYVMLTGNLPFDDQNTVVLYQKILKGDARIPKWLSPGAQDILRKILDPNPITRLDITGIRAHEWFRQDYTPAMPFDDDDDNNISDGNLHMTENQDIETSPAISQINAFQLIGMSSCLDLSGFFEKEDVSERKIRFVSNYSPTSLFEKIESTVTEKGFQVQKNSGKLKVIQVCKEPANPRGHGNLLISAEVFEINESLYVVELKRSSGDCSLYRQLCASLSEDLGICKRQQLLKKDSMRQDLCRYNSSF</sequence>
<keyword id="KW-0067">ATP-binding</keyword>
<keyword id="KW-0418">Kinase</keyword>
<keyword id="KW-0464">Manganese</keyword>
<keyword id="KW-0547">Nucleotide-binding</keyword>
<keyword id="KW-1185">Reference proteome</keyword>
<keyword id="KW-0723">Serine/threonine-protein kinase</keyword>
<keyword id="KW-0808">Transferase</keyword>
<evidence type="ECO:0000250" key="1"/>
<evidence type="ECO:0000255" key="2">
    <source>
        <dbReference type="PROSITE-ProRule" id="PRU00159"/>
    </source>
</evidence>
<evidence type="ECO:0000255" key="3">
    <source>
        <dbReference type="PROSITE-ProRule" id="PRU00256"/>
    </source>
</evidence>
<evidence type="ECO:0000255" key="4">
    <source>
        <dbReference type="PROSITE-ProRule" id="PRU10027"/>
    </source>
</evidence>
<evidence type="ECO:0000269" key="5">
    <source>
    </source>
</evidence>
<evidence type="ECO:0000305" key="6"/>
<feature type="chain" id="PRO_0000338379" description="CBL-interacting protein kinase 21">
    <location>
        <begin position="1"/>
        <end position="525"/>
    </location>
</feature>
<feature type="domain" description="Protein kinase" evidence="2">
    <location>
        <begin position="87"/>
        <end position="342"/>
    </location>
</feature>
<feature type="domain" description="NAF" evidence="3">
    <location>
        <begin position="372"/>
        <end position="401"/>
    </location>
</feature>
<feature type="region of interest" description="Activation loop" evidence="1">
    <location>
        <begin position="228"/>
        <end position="257"/>
    </location>
</feature>
<feature type="region of interest" description="PPI" evidence="1">
    <location>
        <begin position="407"/>
        <end position="436"/>
    </location>
</feature>
<feature type="active site" description="Proton acceptor" evidence="2 4">
    <location>
        <position position="210"/>
    </location>
</feature>
<feature type="binding site" evidence="2">
    <location>
        <begin position="93"/>
        <end position="101"/>
    </location>
    <ligand>
        <name>ATP</name>
        <dbReference type="ChEBI" id="CHEBI:30616"/>
    </ligand>
</feature>
<feature type="binding site" evidence="2">
    <location>
        <position position="116"/>
    </location>
    <ligand>
        <name>ATP</name>
        <dbReference type="ChEBI" id="CHEBI:30616"/>
    </ligand>
</feature>
<organism>
    <name type="scientific">Oryza sativa subsp. japonica</name>
    <name type="common">Rice</name>
    <dbReference type="NCBI Taxonomy" id="39947"/>
    <lineage>
        <taxon>Eukaryota</taxon>
        <taxon>Viridiplantae</taxon>
        <taxon>Streptophyta</taxon>
        <taxon>Embryophyta</taxon>
        <taxon>Tracheophyta</taxon>
        <taxon>Spermatophyta</taxon>
        <taxon>Magnoliopsida</taxon>
        <taxon>Liliopsida</taxon>
        <taxon>Poales</taxon>
        <taxon>Poaceae</taxon>
        <taxon>BOP clade</taxon>
        <taxon>Oryzoideae</taxon>
        <taxon>Oryzeae</taxon>
        <taxon>Oryzinae</taxon>
        <taxon>Oryza</taxon>
        <taxon>Oryza sativa</taxon>
    </lineage>
</organism>
<reference key="1">
    <citation type="journal article" date="2005" name="Nature">
        <title>The map-based sequence of the rice genome.</title>
        <authorList>
            <consortium name="International rice genome sequencing project (IRGSP)"/>
        </authorList>
    </citation>
    <scope>NUCLEOTIDE SEQUENCE [LARGE SCALE GENOMIC DNA]</scope>
    <source>
        <strain>cv. Nipponbare</strain>
    </source>
</reference>
<reference key="2">
    <citation type="journal article" date="2008" name="Nucleic Acids Res.">
        <title>The rice annotation project database (RAP-DB): 2008 update.</title>
        <authorList>
            <consortium name="The rice annotation project (RAP)"/>
        </authorList>
    </citation>
    <scope>GENOME REANNOTATION</scope>
    <source>
        <strain>cv. Nipponbare</strain>
    </source>
</reference>
<reference key="3">
    <citation type="journal article" date="2013" name="Rice">
        <title>Improvement of the Oryza sativa Nipponbare reference genome using next generation sequence and optical map data.</title>
        <authorList>
            <person name="Kawahara Y."/>
            <person name="de la Bastide M."/>
            <person name="Hamilton J.P."/>
            <person name="Kanamori H."/>
            <person name="McCombie W.R."/>
            <person name="Ouyang S."/>
            <person name="Schwartz D.C."/>
            <person name="Tanaka T."/>
            <person name="Wu J."/>
            <person name="Zhou S."/>
            <person name="Childs K.L."/>
            <person name="Davidson R.M."/>
            <person name="Lin H."/>
            <person name="Quesada-Ocampo L."/>
            <person name="Vaillancourt B."/>
            <person name="Sakai H."/>
            <person name="Lee S.S."/>
            <person name="Kim J."/>
            <person name="Numa H."/>
            <person name="Itoh T."/>
            <person name="Buell C.R."/>
            <person name="Matsumoto T."/>
        </authorList>
    </citation>
    <scope>GENOME REANNOTATION</scope>
    <source>
        <strain>cv. Nipponbare</strain>
    </source>
</reference>
<reference key="4">
    <citation type="journal article" date="2003" name="Science">
        <title>Collection, mapping, and annotation of over 28,000 cDNA clones from japonica rice.</title>
        <authorList>
            <consortium name="The rice full-length cDNA consortium"/>
        </authorList>
    </citation>
    <scope>NUCLEOTIDE SEQUENCE [LARGE SCALE MRNA] OF 37-525</scope>
    <source>
        <strain>cv. Nipponbare</strain>
    </source>
</reference>
<reference key="5">
    <citation type="journal article" date="2004" name="Plant Physiol.">
        <title>Calcium sensors and their interacting protein kinases: genomics of the Arabidopsis and rice CBL-CIPK signaling networks.</title>
        <authorList>
            <person name="Kolukisaoglu U."/>
            <person name="Weinl S."/>
            <person name="Blazevic D."/>
            <person name="Batistic O."/>
            <person name="Kudla J."/>
        </authorList>
    </citation>
    <scope>GENE FAMILY</scope>
    <scope>NOMENCLATURE</scope>
</reference>
<reference key="6">
    <citation type="journal article" date="2007" name="Plant Physiol.">
        <title>Characterization of stress-responsive CIPK genes in rice for stress tolerance improvement.</title>
        <authorList>
            <person name="Xiang Y."/>
            <person name="Huang Y."/>
            <person name="Xiong L."/>
        </authorList>
    </citation>
    <scope>INDUCTION</scope>
</reference>
<dbReference type="EC" id="2.7.11.1"/>
<dbReference type="EMBL" id="AP003749">
    <property type="protein sequence ID" value="BAD30183.1"/>
    <property type="status" value="ALT_SEQ"/>
    <property type="molecule type" value="Genomic_DNA"/>
</dbReference>
<dbReference type="EMBL" id="AP008213">
    <property type="protein sequence ID" value="BAF22311.2"/>
    <property type="status" value="ALT_SEQ"/>
    <property type="molecule type" value="Genomic_DNA"/>
</dbReference>
<dbReference type="EMBL" id="AP014963">
    <property type="status" value="NOT_ANNOTATED_CDS"/>
    <property type="molecule type" value="Genomic_DNA"/>
</dbReference>
<dbReference type="EMBL" id="AK107137">
    <property type="status" value="NOT_ANNOTATED_CDS"/>
    <property type="molecule type" value="mRNA"/>
</dbReference>
<dbReference type="RefSeq" id="XP_015646131.1">
    <property type="nucleotide sequence ID" value="XM_015790645.1"/>
</dbReference>
<dbReference type="SMR" id="Q0D4B2"/>
<dbReference type="FunCoup" id="Q0D4B2">
    <property type="interactions" value="99"/>
</dbReference>
<dbReference type="STRING" id="39947.Q0D4B2"/>
<dbReference type="PaxDb" id="39947-Q0D4B2"/>
<dbReference type="KEGG" id="dosa:Os07g0637000"/>
<dbReference type="eggNOG" id="KOG0583">
    <property type="taxonomic scope" value="Eukaryota"/>
</dbReference>
<dbReference type="HOGENOM" id="CLU_000288_59_0_1"/>
<dbReference type="InParanoid" id="Q0D4B2"/>
<dbReference type="OrthoDB" id="193931at2759"/>
<dbReference type="Proteomes" id="UP000000763">
    <property type="component" value="Chromosome 7"/>
</dbReference>
<dbReference type="Proteomes" id="UP000059680">
    <property type="component" value="Chromosome 7"/>
</dbReference>
<dbReference type="GO" id="GO:0005524">
    <property type="term" value="F:ATP binding"/>
    <property type="evidence" value="ECO:0007669"/>
    <property type="project" value="UniProtKB-KW"/>
</dbReference>
<dbReference type="GO" id="GO:0106310">
    <property type="term" value="F:protein serine kinase activity"/>
    <property type="evidence" value="ECO:0007669"/>
    <property type="project" value="RHEA"/>
</dbReference>
<dbReference type="GO" id="GO:0004674">
    <property type="term" value="F:protein serine/threonine kinase activity"/>
    <property type="evidence" value="ECO:0000318"/>
    <property type="project" value="GO_Central"/>
</dbReference>
<dbReference type="GO" id="GO:0007165">
    <property type="term" value="P:signal transduction"/>
    <property type="evidence" value="ECO:0000318"/>
    <property type="project" value="GO_Central"/>
</dbReference>
<dbReference type="CDD" id="cd12195">
    <property type="entry name" value="CIPK_C"/>
    <property type="match status" value="1"/>
</dbReference>
<dbReference type="FunFam" id="1.10.510.10:FF:000279">
    <property type="entry name" value="Non-specific serine/threonine protein kinase"/>
    <property type="match status" value="1"/>
</dbReference>
<dbReference type="FunFam" id="3.30.200.20:FF:000096">
    <property type="entry name" value="Non-specific serine/threonine protein kinase"/>
    <property type="match status" value="1"/>
</dbReference>
<dbReference type="FunFam" id="3.30.310.80:FF:000015">
    <property type="entry name" value="Non-specific serine/threonine protein kinase"/>
    <property type="match status" value="1"/>
</dbReference>
<dbReference type="Gene3D" id="3.30.310.80">
    <property type="entry name" value="Kinase associated domain 1, KA1"/>
    <property type="match status" value="1"/>
</dbReference>
<dbReference type="Gene3D" id="3.30.200.20">
    <property type="entry name" value="Phosphorylase Kinase, domain 1"/>
    <property type="match status" value="1"/>
</dbReference>
<dbReference type="Gene3D" id="1.10.510.10">
    <property type="entry name" value="Transferase(Phosphotransferase) domain 1"/>
    <property type="match status" value="1"/>
</dbReference>
<dbReference type="InterPro" id="IPR011009">
    <property type="entry name" value="Kinase-like_dom_sf"/>
</dbReference>
<dbReference type="InterPro" id="IPR018451">
    <property type="entry name" value="NAF/FISL_domain"/>
</dbReference>
<dbReference type="InterPro" id="IPR004041">
    <property type="entry name" value="NAF_dom"/>
</dbReference>
<dbReference type="InterPro" id="IPR000719">
    <property type="entry name" value="Prot_kinase_dom"/>
</dbReference>
<dbReference type="InterPro" id="IPR017441">
    <property type="entry name" value="Protein_kinase_ATP_BS"/>
</dbReference>
<dbReference type="InterPro" id="IPR008271">
    <property type="entry name" value="Ser/Thr_kinase_AS"/>
</dbReference>
<dbReference type="PANTHER" id="PTHR43895">
    <property type="entry name" value="CALCIUM/CALMODULIN-DEPENDENT PROTEIN KINASE KINASE-RELATED"/>
    <property type="match status" value="1"/>
</dbReference>
<dbReference type="PANTHER" id="PTHR43895:SF65">
    <property type="entry name" value="CBL-INTERACTING PROTEIN KINASE 21"/>
    <property type="match status" value="1"/>
</dbReference>
<dbReference type="Pfam" id="PF03822">
    <property type="entry name" value="NAF"/>
    <property type="match status" value="1"/>
</dbReference>
<dbReference type="Pfam" id="PF00069">
    <property type="entry name" value="Pkinase"/>
    <property type="match status" value="1"/>
</dbReference>
<dbReference type="SMART" id="SM00220">
    <property type="entry name" value="S_TKc"/>
    <property type="match status" value="1"/>
</dbReference>
<dbReference type="SUPFAM" id="SSF56112">
    <property type="entry name" value="Protein kinase-like (PK-like)"/>
    <property type="match status" value="1"/>
</dbReference>
<dbReference type="PROSITE" id="PS50816">
    <property type="entry name" value="NAF"/>
    <property type="match status" value="1"/>
</dbReference>
<dbReference type="PROSITE" id="PS00107">
    <property type="entry name" value="PROTEIN_KINASE_ATP"/>
    <property type="match status" value="1"/>
</dbReference>
<dbReference type="PROSITE" id="PS50011">
    <property type="entry name" value="PROTEIN_KINASE_DOM"/>
    <property type="match status" value="1"/>
</dbReference>
<dbReference type="PROSITE" id="PS00108">
    <property type="entry name" value="PROTEIN_KINASE_ST"/>
    <property type="match status" value="1"/>
</dbReference>
<comment type="function">
    <text evidence="1">CIPK serine-threonine protein kinases interact with CBL proteins. Binding of a CBL protein to the regulatory NAF domain of CIPK protein lead to the activation of the kinase in a calcium-dependent manner (By similarity).</text>
</comment>
<comment type="catalytic activity">
    <reaction>
        <text>L-seryl-[protein] + ATP = O-phospho-L-seryl-[protein] + ADP + H(+)</text>
        <dbReference type="Rhea" id="RHEA:17989"/>
        <dbReference type="Rhea" id="RHEA-COMP:9863"/>
        <dbReference type="Rhea" id="RHEA-COMP:11604"/>
        <dbReference type="ChEBI" id="CHEBI:15378"/>
        <dbReference type="ChEBI" id="CHEBI:29999"/>
        <dbReference type="ChEBI" id="CHEBI:30616"/>
        <dbReference type="ChEBI" id="CHEBI:83421"/>
        <dbReference type="ChEBI" id="CHEBI:456216"/>
        <dbReference type="EC" id="2.7.11.1"/>
    </reaction>
</comment>
<comment type="catalytic activity">
    <reaction>
        <text>L-threonyl-[protein] + ATP = O-phospho-L-threonyl-[protein] + ADP + H(+)</text>
        <dbReference type="Rhea" id="RHEA:46608"/>
        <dbReference type="Rhea" id="RHEA-COMP:11060"/>
        <dbReference type="Rhea" id="RHEA-COMP:11605"/>
        <dbReference type="ChEBI" id="CHEBI:15378"/>
        <dbReference type="ChEBI" id="CHEBI:30013"/>
        <dbReference type="ChEBI" id="CHEBI:30616"/>
        <dbReference type="ChEBI" id="CHEBI:61977"/>
        <dbReference type="ChEBI" id="CHEBI:456216"/>
        <dbReference type="EC" id="2.7.11.1"/>
    </reaction>
</comment>
<comment type="cofactor">
    <cofactor evidence="1">
        <name>Mn(2+)</name>
        <dbReference type="ChEBI" id="CHEBI:29035"/>
    </cofactor>
</comment>
<comment type="induction">
    <text evidence="5">By drought and salt stresses.</text>
</comment>
<comment type="domain">
    <text evidence="1">The activation loop within the kinase domain is the target of phosphorylation/activation by upstream protein kinases. The PPI motif mediates the interaction with the ABI (abscisic acid-insensitive) phosphatases (By similarity).</text>
</comment>
<comment type="similarity">
    <text evidence="6">Belongs to the protein kinase superfamily. CAMK Ser/Thr protein kinase family. SNF1 subfamily.</text>
</comment>
<comment type="sequence caution" evidence="6">
    <conflict type="frameshift">
        <sequence resource="EMBL" id="AK107137"/>
    </conflict>
</comment>
<comment type="sequence caution" evidence="6">
    <conflict type="erroneous gene model prediction">
        <sequence resource="EMBL-CDS" id="BAD30183"/>
    </conflict>
</comment>
<comment type="sequence caution" evidence="6">
    <conflict type="erroneous gene model prediction">
        <sequence resource="EMBL-CDS" id="BAF22311"/>
    </conflict>
</comment>